<sequence>MLSNLLILPMLLPFLCALILVFLKNNDRISKYLYLGTMTITTIISLMLLIYVQRHRPITLDFGGWSAPFGIQFLGDSLSLIMVTTASFVITLIMAYGFGRGEHKANRYHLPSFILFLSVGVIGSFLTSDLFNLYVMFEIMLLASFVLITLGQSVEQLRAAIIYVVLNIIGSWLFLLGIGLLYKTVGTLNFSHIAMRLNDMGDNRTVTMISLIFLVAFSAKAALVLFMWLPKAYAVLNTELAALFAALMTKVGAYALIRFFTLLFDQHNDLIHPLLATMAAITMVIGAIGVIAYKDIKKIAAYQVIISIGFIILGLGTNTFAGINGAIFYLVNDIVVKTLLFFIIGSLVYITGYRQYQYLNGLAKKEPLFGVAFIIMIFAIGGVPPFSGFPGKVLIFQGALQNGNYIGLALMIITSLIAMYSLFRILFYMYFGDKDGEEVNFKKIPLYRKRILSILVVVVIAIGIAAPVVLNVTSDATELNTSDQLYQKLVNPHLKGED</sequence>
<protein>
    <recommendedName>
        <fullName>Putative antiporter subunit mnhD2</fullName>
    </recommendedName>
    <alternativeName>
        <fullName>Mrp complex subunit D2</fullName>
    </alternativeName>
    <alternativeName>
        <fullName>Putative NADH-ubiquinone oxidoreductase subunit mnhD2</fullName>
    </alternativeName>
</protein>
<dbReference type="EMBL" id="CP000703">
    <property type="protein sequence ID" value="ABQ48451.1"/>
    <property type="molecule type" value="Genomic_DNA"/>
</dbReference>
<dbReference type="RefSeq" id="WP_000950548.1">
    <property type="nucleotide sequence ID" value="NC_009487.1"/>
</dbReference>
<dbReference type="SMR" id="A5IQH8"/>
<dbReference type="KEGG" id="saj:SaurJH9_0648"/>
<dbReference type="HOGENOM" id="CLU_007100_9_2_9"/>
<dbReference type="GO" id="GO:0005886">
    <property type="term" value="C:plasma membrane"/>
    <property type="evidence" value="ECO:0007669"/>
    <property type="project" value="UniProtKB-SubCell"/>
</dbReference>
<dbReference type="GO" id="GO:0015297">
    <property type="term" value="F:antiporter activity"/>
    <property type="evidence" value="ECO:0007669"/>
    <property type="project" value="UniProtKB-KW"/>
</dbReference>
<dbReference type="GO" id="GO:0008137">
    <property type="term" value="F:NADH dehydrogenase (ubiquinone) activity"/>
    <property type="evidence" value="ECO:0007669"/>
    <property type="project" value="InterPro"/>
</dbReference>
<dbReference type="GO" id="GO:0042773">
    <property type="term" value="P:ATP synthesis coupled electron transport"/>
    <property type="evidence" value="ECO:0007669"/>
    <property type="project" value="InterPro"/>
</dbReference>
<dbReference type="InterPro" id="IPR050586">
    <property type="entry name" value="CPA3_Na-H_Antiporter_D"/>
</dbReference>
<dbReference type="InterPro" id="IPR003918">
    <property type="entry name" value="NADH_UbQ_OxRdtase"/>
</dbReference>
<dbReference type="InterPro" id="IPR001750">
    <property type="entry name" value="ND/Mrp_TM"/>
</dbReference>
<dbReference type="NCBIfam" id="NF009306">
    <property type="entry name" value="PRK12663.1"/>
    <property type="match status" value="1"/>
</dbReference>
<dbReference type="PANTHER" id="PTHR42703:SF1">
    <property type="entry name" value="NA(+)_H(+) ANTIPORTER SUBUNIT D1"/>
    <property type="match status" value="1"/>
</dbReference>
<dbReference type="PANTHER" id="PTHR42703">
    <property type="entry name" value="NADH DEHYDROGENASE"/>
    <property type="match status" value="1"/>
</dbReference>
<dbReference type="Pfam" id="PF00361">
    <property type="entry name" value="Proton_antipo_M"/>
    <property type="match status" value="1"/>
</dbReference>
<dbReference type="PRINTS" id="PR01437">
    <property type="entry name" value="NUOXDRDTASE4"/>
</dbReference>
<keyword id="KW-0050">Antiport</keyword>
<keyword id="KW-1003">Cell membrane</keyword>
<keyword id="KW-0406">Ion transport</keyword>
<keyword id="KW-0472">Membrane</keyword>
<keyword id="KW-0812">Transmembrane</keyword>
<keyword id="KW-1133">Transmembrane helix</keyword>
<keyword id="KW-0813">Transport</keyword>
<reference key="1">
    <citation type="submission" date="2007-05" db="EMBL/GenBank/DDBJ databases">
        <title>Complete sequence of chromosome of Staphylococcus aureus subsp. aureus JH9.</title>
        <authorList>
            <consortium name="US DOE Joint Genome Institute"/>
            <person name="Copeland A."/>
            <person name="Lucas S."/>
            <person name="Lapidus A."/>
            <person name="Barry K."/>
            <person name="Detter J.C."/>
            <person name="Glavina del Rio T."/>
            <person name="Hammon N."/>
            <person name="Israni S."/>
            <person name="Pitluck S."/>
            <person name="Chain P."/>
            <person name="Malfatti S."/>
            <person name="Shin M."/>
            <person name="Vergez L."/>
            <person name="Schmutz J."/>
            <person name="Larimer F."/>
            <person name="Land M."/>
            <person name="Hauser L."/>
            <person name="Kyrpides N."/>
            <person name="Kim E."/>
            <person name="Tomasz A."/>
            <person name="Richardson P."/>
        </authorList>
    </citation>
    <scope>NUCLEOTIDE SEQUENCE [LARGE SCALE GENOMIC DNA]</scope>
    <source>
        <strain>JH9</strain>
    </source>
</reference>
<gene>
    <name type="primary">mnhD2</name>
    <name type="synonym">mrpD2</name>
    <name type="ordered locus">SaurJH9_0648</name>
</gene>
<evidence type="ECO:0000250" key="1"/>
<evidence type="ECO:0000255" key="2"/>
<evidence type="ECO:0000305" key="3"/>
<accession>A5IQH8</accession>
<name>MNHD2_STAA9</name>
<comment type="subunit">
    <text evidence="1">May form a heterooligomeric complex that consists of seven subunits: mnhA2, mnhB2, mnhC2, mnhD2, mnhE2, mnhF2 and mnhG2.</text>
</comment>
<comment type="subcellular location">
    <subcellularLocation>
        <location evidence="3">Cell membrane</location>
        <topology evidence="3">Multi-pass membrane protein</topology>
    </subcellularLocation>
</comment>
<comment type="similarity">
    <text evidence="3">Belongs to the CPA3 antiporters (TC 2.A.63) subunit D family.</text>
</comment>
<feature type="chain" id="PRO_0000372232" description="Putative antiporter subunit mnhD2">
    <location>
        <begin position="1"/>
        <end position="498"/>
    </location>
</feature>
<feature type="transmembrane region" description="Helical" evidence="2">
    <location>
        <begin position="2"/>
        <end position="22"/>
    </location>
</feature>
<feature type="transmembrane region" description="Helical" evidence="2">
    <location>
        <begin position="32"/>
        <end position="52"/>
    </location>
</feature>
<feature type="transmembrane region" description="Helical" evidence="2">
    <location>
        <begin position="78"/>
        <end position="98"/>
    </location>
</feature>
<feature type="transmembrane region" description="Helical" evidence="2">
    <location>
        <begin position="108"/>
        <end position="128"/>
    </location>
</feature>
<feature type="transmembrane region" description="Helical" evidence="2">
    <location>
        <begin position="130"/>
        <end position="150"/>
    </location>
</feature>
<feature type="transmembrane region" description="Helical" evidence="2">
    <location>
        <begin position="161"/>
        <end position="181"/>
    </location>
</feature>
<feature type="transmembrane region" description="Helical" evidence="2">
    <location>
        <begin position="209"/>
        <end position="229"/>
    </location>
</feature>
<feature type="transmembrane region" description="Helical" evidence="2">
    <location>
        <begin position="240"/>
        <end position="260"/>
    </location>
</feature>
<feature type="transmembrane region" description="Helical" evidence="2">
    <location>
        <begin position="271"/>
        <end position="291"/>
    </location>
</feature>
<feature type="transmembrane region" description="Helical" evidence="2">
    <location>
        <begin position="308"/>
        <end position="328"/>
    </location>
</feature>
<feature type="transmembrane region" description="Helical" evidence="2">
    <location>
        <begin position="330"/>
        <end position="350"/>
    </location>
</feature>
<feature type="transmembrane region" description="Helical" evidence="2">
    <location>
        <begin position="369"/>
        <end position="389"/>
    </location>
</feature>
<feature type="transmembrane region" description="Helical" evidence="2">
    <location>
        <begin position="403"/>
        <end position="423"/>
    </location>
</feature>
<feature type="transmembrane region" description="Helical" evidence="2">
    <location>
        <begin position="451"/>
        <end position="471"/>
    </location>
</feature>
<organism>
    <name type="scientific">Staphylococcus aureus (strain JH9)</name>
    <dbReference type="NCBI Taxonomy" id="359786"/>
    <lineage>
        <taxon>Bacteria</taxon>
        <taxon>Bacillati</taxon>
        <taxon>Bacillota</taxon>
        <taxon>Bacilli</taxon>
        <taxon>Bacillales</taxon>
        <taxon>Staphylococcaceae</taxon>
        <taxon>Staphylococcus</taxon>
    </lineage>
</organism>
<proteinExistence type="inferred from homology"/>